<sequence length="247" mass="28263">MSGKDRIEIFPSRMAQTIMKARLKGAQTGRNLLKKKSDALTLRFRQILKKIIETKMLMGEVMREAAFSLAEAKFTAGDFSTTVIQNVNKAQVKIRAKKDNVAGVTLPVFEHYHEGTDSYELTGLARGGEQLAKLKRNYAKAVELLVELASLQTSFVTLDEAIKITNRRVNAIEHVIIPRIERTLAYIITELDEREREEFYRLKKIQEKKKILKEKSEKDLEQRRAAGEVLEPANLLAEEKDEDLLFE</sequence>
<dbReference type="EMBL" id="AF145316">
    <property type="protein sequence ID" value="AAD33953.1"/>
    <property type="molecule type" value="mRNA"/>
</dbReference>
<dbReference type="EMBL" id="AF100741">
    <property type="protein sequence ID" value="AAD40384.1"/>
    <property type="molecule type" value="mRNA"/>
</dbReference>
<dbReference type="EMBL" id="AF104629">
    <property type="protein sequence ID" value="AAG30726.1"/>
    <property type="molecule type" value="mRNA"/>
</dbReference>
<dbReference type="EMBL" id="AK315784">
    <property type="protein sequence ID" value="BAG38130.1"/>
    <property type="molecule type" value="mRNA"/>
</dbReference>
<dbReference type="EMBL" id="CH471061">
    <property type="protein sequence ID" value="EAW80931.1"/>
    <property type="molecule type" value="Genomic_DNA"/>
</dbReference>
<dbReference type="EMBL" id="BC001411">
    <property type="protein sequence ID" value="AAH01411.1"/>
    <property type="molecule type" value="mRNA"/>
</dbReference>
<dbReference type="CCDS" id="CCDS9780.1"/>
<dbReference type="RefSeq" id="NP_057078.1">
    <property type="nucleotide sequence ID" value="NM_015994.4"/>
</dbReference>
<dbReference type="PDB" id="6WLZ">
    <property type="method" value="EM"/>
    <property type="resolution" value="2.90 A"/>
    <property type="chains" value="G=1-247"/>
</dbReference>
<dbReference type="PDB" id="6WM2">
    <property type="method" value="EM"/>
    <property type="resolution" value="3.10 A"/>
    <property type="chains" value="G=1-247"/>
</dbReference>
<dbReference type="PDB" id="6WM3">
    <property type="method" value="EM"/>
    <property type="resolution" value="3.40 A"/>
    <property type="chains" value="G=1-247"/>
</dbReference>
<dbReference type="PDB" id="6WM4">
    <property type="method" value="EM"/>
    <property type="resolution" value="3.60 A"/>
    <property type="chains" value="G=1-247"/>
</dbReference>
<dbReference type="PDB" id="7U4T">
    <property type="method" value="EM"/>
    <property type="resolution" value="3.60 A"/>
    <property type="chains" value="G=1-247"/>
</dbReference>
<dbReference type="PDB" id="7UNF">
    <property type="method" value="EM"/>
    <property type="resolution" value="4.08 A"/>
    <property type="chains" value="D=1-247"/>
</dbReference>
<dbReference type="PDBsum" id="6WLZ"/>
<dbReference type="PDBsum" id="6WM2"/>
<dbReference type="PDBsum" id="6WM3"/>
<dbReference type="PDBsum" id="6WM4"/>
<dbReference type="PDBsum" id="7U4T"/>
<dbReference type="PDBsum" id="7UNF"/>
<dbReference type="EMDB" id="EMD-21845"/>
<dbReference type="EMDB" id="EMD-21847"/>
<dbReference type="EMDB" id="EMD-21848"/>
<dbReference type="EMDB" id="EMD-21849"/>
<dbReference type="EMDB" id="EMD-26334"/>
<dbReference type="EMDB" id="EMD-26623"/>
<dbReference type="SMR" id="Q9Y5K8"/>
<dbReference type="BioGRID" id="119513">
    <property type="interactions" value="103"/>
</dbReference>
<dbReference type="ComplexPortal" id="CPX-2470">
    <property type="entry name" value="Vacuolar proton translocating ATPase complex, ATP6V0A1 variant"/>
</dbReference>
<dbReference type="ComplexPortal" id="CPX-6904">
    <property type="entry name" value="Vacuolar proton translocating ATPase complex, ATP6V0A2 variant"/>
</dbReference>
<dbReference type="ComplexPortal" id="CPX-6905">
    <property type="entry name" value="Vacuolar proton translocating ATPase complex, ATP6V0A3 variant"/>
</dbReference>
<dbReference type="ComplexPortal" id="CPX-6912">
    <property type="entry name" value="Vacuolar proton translocating ATPase complex, ATP6V0A4 variant"/>
</dbReference>
<dbReference type="FunCoup" id="Q9Y5K8">
    <property type="interactions" value="2015"/>
</dbReference>
<dbReference type="IntAct" id="Q9Y5K8">
    <property type="interactions" value="60"/>
</dbReference>
<dbReference type="MINT" id="Q9Y5K8"/>
<dbReference type="STRING" id="9606.ENSP00000216442"/>
<dbReference type="DrugBank" id="DB01133">
    <property type="generic name" value="Tiludronic acid"/>
</dbReference>
<dbReference type="iPTMnet" id="Q9Y5K8"/>
<dbReference type="PhosphoSitePlus" id="Q9Y5K8"/>
<dbReference type="SwissPalm" id="Q9Y5K8"/>
<dbReference type="BioMuta" id="ATP6V1D"/>
<dbReference type="DMDM" id="10720351"/>
<dbReference type="jPOST" id="Q9Y5K8"/>
<dbReference type="MassIVE" id="Q9Y5K8"/>
<dbReference type="PaxDb" id="9606-ENSP00000216442"/>
<dbReference type="PeptideAtlas" id="Q9Y5K8"/>
<dbReference type="ProteomicsDB" id="86435"/>
<dbReference type="Pumba" id="Q9Y5K8"/>
<dbReference type="Antibodypedia" id="24797">
    <property type="antibodies" value="107 antibodies from 31 providers"/>
</dbReference>
<dbReference type="DNASU" id="51382"/>
<dbReference type="Ensembl" id="ENST00000216442.12">
    <property type="protein sequence ID" value="ENSP00000216442.7"/>
    <property type="gene ID" value="ENSG00000100554.12"/>
</dbReference>
<dbReference type="Ensembl" id="ENST00000554087.5">
    <property type="protein sequence ID" value="ENSP00000451167.1"/>
    <property type="gene ID" value="ENSG00000100554.12"/>
</dbReference>
<dbReference type="GeneID" id="51382"/>
<dbReference type="KEGG" id="hsa:51382"/>
<dbReference type="MANE-Select" id="ENST00000216442.12">
    <property type="protein sequence ID" value="ENSP00000216442.7"/>
    <property type="RefSeq nucleotide sequence ID" value="NM_015994.4"/>
    <property type="RefSeq protein sequence ID" value="NP_057078.1"/>
</dbReference>
<dbReference type="UCSC" id="uc001xjf.4">
    <property type="organism name" value="human"/>
</dbReference>
<dbReference type="AGR" id="HGNC:13527"/>
<dbReference type="CTD" id="51382"/>
<dbReference type="DisGeNET" id="51382"/>
<dbReference type="GeneCards" id="ATP6V1D"/>
<dbReference type="HGNC" id="HGNC:13527">
    <property type="gene designation" value="ATP6V1D"/>
</dbReference>
<dbReference type="HPA" id="ENSG00000100554">
    <property type="expression patterns" value="Low tissue specificity"/>
</dbReference>
<dbReference type="MIM" id="609398">
    <property type="type" value="gene"/>
</dbReference>
<dbReference type="neXtProt" id="NX_Q9Y5K8"/>
<dbReference type="OpenTargets" id="ENSG00000100554"/>
<dbReference type="PharmGKB" id="PA25157"/>
<dbReference type="VEuPathDB" id="HostDB:ENSG00000100554"/>
<dbReference type="eggNOG" id="KOG1647">
    <property type="taxonomic scope" value="Eukaryota"/>
</dbReference>
<dbReference type="GeneTree" id="ENSGT00390000010770"/>
<dbReference type="HOGENOM" id="CLU_069688_0_0_1"/>
<dbReference type="InParanoid" id="Q9Y5K8"/>
<dbReference type="OMA" id="REEFFRM"/>
<dbReference type="OrthoDB" id="7676488at2759"/>
<dbReference type="PAN-GO" id="Q9Y5K8">
    <property type="GO annotations" value="1 GO annotation based on evolutionary models"/>
</dbReference>
<dbReference type="PhylomeDB" id="Q9Y5K8"/>
<dbReference type="TreeFam" id="TF300160"/>
<dbReference type="BioCyc" id="MetaCyc:HS02107-MONOMER"/>
<dbReference type="PathwayCommons" id="Q9Y5K8"/>
<dbReference type="Reactome" id="R-HSA-1222556">
    <property type="pathway name" value="ROS and RNS production in phagocytes"/>
</dbReference>
<dbReference type="Reactome" id="R-HSA-6798695">
    <property type="pathway name" value="Neutrophil degranulation"/>
</dbReference>
<dbReference type="Reactome" id="R-HSA-77387">
    <property type="pathway name" value="Insulin receptor recycling"/>
</dbReference>
<dbReference type="Reactome" id="R-HSA-917977">
    <property type="pathway name" value="Transferrin endocytosis and recycling"/>
</dbReference>
<dbReference type="Reactome" id="R-HSA-9639288">
    <property type="pathway name" value="Amino acids regulate mTORC1"/>
</dbReference>
<dbReference type="Reactome" id="R-HSA-983712">
    <property type="pathway name" value="Ion channel transport"/>
</dbReference>
<dbReference type="SignaLink" id="Q9Y5K8"/>
<dbReference type="SIGNOR" id="Q9Y5K8"/>
<dbReference type="BioGRID-ORCS" id="51382">
    <property type="hits" value="683 hits in 1169 CRISPR screens"/>
</dbReference>
<dbReference type="CD-CODE" id="FB4E32DD">
    <property type="entry name" value="Presynaptic clusters and postsynaptic densities"/>
</dbReference>
<dbReference type="ChiTaRS" id="ATP6V1D">
    <property type="organism name" value="human"/>
</dbReference>
<dbReference type="GeneWiki" id="ATP6V1D"/>
<dbReference type="GenomeRNAi" id="51382"/>
<dbReference type="Pharos" id="Q9Y5K8">
    <property type="development level" value="Tbio"/>
</dbReference>
<dbReference type="PRO" id="PR:Q9Y5K8"/>
<dbReference type="Proteomes" id="UP000005640">
    <property type="component" value="Chromosome 14"/>
</dbReference>
<dbReference type="RNAct" id="Q9Y5K8">
    <property type="molecule type" value="protein"/>
</dbReference>
<dbReference type="Bgee" id="ENSG00000100554">
    <property type="expression patterns" value="Expressed in endothelial cell and 210 other cell types or tissues"/>
</dbReference>
<dbReference type="ExpressionAtlas" id="Q9Y5K8">
    <property type="expression patterns" value="baseline and differential"/>
</dbReference>
<dbReference type="GO" id="GO:0005813">
    <property type="term" value="C:centrosome"/>
    <property type="evidence" value="ECO:0007669"/>
    <property type="project" value="UniProtKB-SubCell"/>
</dbReference>
<dbReference type="GO" id="GO:0005929">
    <property type="term" value="C:cilium"/>
    <property type="evidence" value="ECO:0007669"/>
    <property type="project" value="UniProtKB-SubCell"/>
</dbReference>
<dbReference type="GO" id="GO:0030665">
    <property type="term" value="C:clathrin-coated vesicle membrane"/>
    <property type="evidence" value="ECO:0007669"/>
    <property type="project" value="UniProtKB-SubCell"/>
</dbReference>
<dbReference type="GO" id="GO:0005829">
    <property type="term" value="C:cytosol"/>
    <property type="evidence" value="ECO:0000304"/>
    <property type="project" value="Reactome"/>
</dbReference>
<dbReference type="GO" id="GO:0010008">
    <property type="term" value="C:endosome membrane"/>
    <property type="evidence" value="ECO:0000303"/>
    <property type="project" value="ComplexPortal"/>
</dbReference>
<dbReference type="GO" id="GO:0070062">
    <property type="term" value="C:extracellular exosome"/>
    <property type="evidence" value="ECO:0007005"/>
    <property type="project" value="UniProtKB"/>
</dbReference>
<dbReference type="GO" id="GO:0098850">
    <property type="term" value="C:extrinsic component of synaptic vesicle membrane"/>
    <property type="evidence" value="ECO:0007669"/>
    <property type="project" value="Ensembl"/>
</dbReference>
<dbReference type="GO" id="GO:0000139">
    <property type="term" value="C:Golgi membrane"/>
    <property type="evidence" value="ECO:0000303"/>
    <property type="project" value="ComplexPortal"/>
</dbReference>
<dbReference type="GO" id="GO:0005765">
    <property type="term" value="C:lysosomal membrane"/>
    <property type="evidence" value="ECO:0007005"/>
    <property type="project" value="UniProtKB"/>
</dbReference>
<dbReference type="GO" id="GO:0016020">
    <property type="term" value="C:membrane"/>
    <property type="evidence" value="ECO:0000314"/>
    <property type="project" value="UniProtKB"/>
</dbReference>
<dbReference type="GO" id="GO:0005654">
    <property type="term" value="C:nucleoplasm"/>
    <property type="evidence" value="ECO:0000314"/>
    <property type="project" value="HPA"/>
</dbReference>
<dbReference type="GO" id="GO:0005886">
    <property type="term" value="C:plasma membrane"/>
    <property type="evidence" value="ECO:0000314"/>
    <property type="project" value="HPA"/>
</dbReference>
<dbReference type="GO" id="GO:0033176">
    <property type="term" value="C:proton-transporting V-type ATPase complex"/>
    <property type="evidence" value="ECO:0000314"/>
    <property type="project" value="UniProtKB"/>
</dbReference>
<dbReference type="GO" id="GO:0035579">
    <property type="term" value="C:specific granule membrane"/>
    <property type="evidence" value="ECO:0000304"/>
    <property type="project" value="Reactome"/>
</dbReference>
<dbReference type="GO" id="GO:0000221">
    <property type="term" value="C:vacuolar proton-transporting V-type ATPase, V1 domain"/>
    <property type="evidence" value="ECO:0000250"/>
    <property type="project" value="UniProtKB"/>
</dbReference>
<dbReference type="GO" id="GO:0046961">
    <property type="term" value="F:proton-transporting ATPase activity, rotational mechanism"/>
    <property type="evidence" value="ECO:0007669"/>
    <property type="project" value="InterPro"/>
</dbReference>
<dbReference type="GO" id="GO:0060271">
    <property type="term" value="P:cilium assembly"/>
    <property type="evidence" value="ECO:0000315"/>
    <property type="project" value="UniProtKB"/>
</dbReference>
<dbReference type="GO" id="GO:0048388">
    <property type="term" value="P:endosomal lumen acidification"/>
    <property type="evidence" value="ECO:0000303"/>
    <property type="project" value="ComplexPortal"/>
</dbReference>
<dbReference type="GO" id="GO:0061795">
    <property type="term" value="P:Golgi lumen acidification"/>
    <property type="evidence" value="ECO:0000303"/>
    <property type="project" value="ComplexPortal"/>
</dbReference>
<dbReference type="GO" id="GO:0051452">
    <property type="term" value="P:intracellular pH reduction"/>
    <property type="evidence" value="ECO:0000303"/>
    <property type="project" value="ComplexPortal"/>
</dbReference>
<dbReference type="GO" id="GO:0007042">
    <property type="term" value="P:lysosomal lumen acidification"/>
    <property type="evidence" value="ECO:0000303"/>
    <property type="project" value="ComplexPortal"/>
</dbReference>
<dbReference type="GO" id="GO:0061512">
    <property type="term" value="P:protein localization to cilium"/>
    <property type="evidence" value="ECO:0000315"/>
    <property type="project" value="UniProtKB"/>
</dbReference>
<dbReference type="GO" id="GO:1902600">
    <property type="term" value="P:proton transmembrane transport"/>
    <property type="evidence" value="ECO:0000303"/>
    <property type="project" value="ComplexPortal"/>
</dbReference>
<dbReference type="GO" id="GO:0016241">
    <property type="term" value="P:regulation of macroautophagy"/>
    <property type="evidence" value="ECO:0000303"/>
    <property type="project" value="ParkinsonsUK-UCL"/>
</dbReference>
<dbReference type="GO" id="GO:0097401">
    <property type="term" value="P:synaptic vesicle lumen acidification"/>
    <property type="evidence" value="ECO:0007669"/>
    <property type="project" value="Ensembl"/>
</dbReference>
<dbReference type="GO" id="GO:0007035">
    <property type="term" value="P:vacuolar acidification"/>
    <property type="evidence" value="ECO:0000303"/>
    <property type="project" value="ComplexPortal"/>
</dbReference>
<dbReference type="FunFam" id="1.10.287.3240:FF:000001">
    <property type="entry name" value="V-type proton ATPase subunit D"/>
    <property type="match status" value="1"/>
</dbReference>
<dbReference type="Gene3D" id="1.10.287.3240">
    <property type="match status" value="1"/>
</dbReference>
<dbReference type="InterPro" id="IPR002699">
    <property type="entry name" value="V_ATPase_D"/>
</dbReference>
<dbReference type="NCBIfam" id="TIGR00309">
    <property type="entry name" value="V_ATPase_subD"/>
    <property type="match status" value="1"/>
</dbReference>
<dbReference type="PANTHER" id="PTHR11671">
    <property type="entry name" value="V-TYPE ATP SYNTHASE SUBUNIT D"/>
    <property type="match status" value="1"/>
</dbReference>
<dbReference type="Pfam" id="PF01813">
    <property type="entry name" value="ATP-synt_D"/>
    <property type="match status" value="1"/>
</dbReference>
<gene>
    <name type="primary">ATP6V1D</name>
    <name type="synonym">ATP6M</name>
    <name type="synonym">VATD</name>
</gene>
<feature type="chain" id="PRO_0000144231" description="V-type proton ATPase subunit D">
    <location>
        <begin position="1"/>
        <end position="247"/>
    </location>
</feature>
<feature type="sequence conflict" description="In Ref. 2; AAD40384." evidence="4" ref="2">
    <original>EVLEPANL</original>
    <variation>RCWSLLIF</variation>
    <location>
        <begin position="228"/>
        <end position="235"/>
    </location>
</feature>
<feature type="helix" evidence="10">
    <location>
        <begin position="15"/>
        <end position="73"/>
    </location>
</feature>
<feature type="helix" evidence="10">
    <location>
        <begin position="80"/>
        <end position="85"/>
    </location>
</feature>
<feature type="strand" evidence="10">
    <location>
        <begin position="94"/>
        <end position="101"/>
    </location>
</feature>
<feature type="strand" evidence="10">
    <location>
        <begin position="104"/>
        <end position="110"/>
    </location>
</feature>
<feature type="strand" evidence="11">
    <location>
        <begin position="118"/>
        <end position="126"/>
    </location>
</feature>
<feature type="helix" evidence="10">
    <location>
        <begin position="129"/>
        <end position="174"/>
    </location>
</feature>
<feature type="helix" evidence="10">
    <location>
        <begin position="176"/>
        <end position="215"/>
    </location>
</feature>
<proteinExistence type="evidence at protein level"/>
<keyword id="KW-0002">3D-structure</keyword>
<keyword id="KW-0966">Cell projection</keyword>
<keyword id="KW-0970">Cilium biogenesis/degradation</keyword>
<keyword id="KW-0963">Cytoplasm</keyword>
<keyword id="KW-0968">Cytoplasmic vesicle</keyword>
<keyword id="KW-0206">Cytoskeleton</keyword>
<keyword id="KW-0375">Hydrogen ion transport</keyword>
<keyword id="KW-0406">Ion transport</keyword>
<keyword id="KW-0472">Membrane</keyword>
<keyword id="KW-1267">Proteomics identification</keyword>
<keyword id="KW-1185">Reference proteome</keyword>
<keyword id="KW-0813">Transport</keyword>
<comment type="function">
    <text evidence="1 2 3">Subunit of the V1 complex of vacuolar(H+)-ATPase (V-ATPase), a multisubunit enzyme composed of a peripheral complex (V1) that hydrolyzes ATP and a membrane integral complex (V0) that translocates protons (PubMed:33065002). V-ATPase is responsible for acidifying and maintaining the pH of intracellular compartments and in some cell types, is targeted to the plasma membrane, where it is responsible for acidifying the extracellular environment (By similarity). May play a role in cilium biogenesis through regulation of the transport and the localization of proteins to the cilium (PubMed:21844891).</text>
</comment>
<comment type="subunit">
    <text evidence="2 3">V-ATPase is a heteromultimeric enzyme made up of two complexes: the ATP-hydrolytic V1 complex and the proton translocation V0 complex (PubMed:33065002). The V1 complex consists of three catalytic AB heterodimers that form a heterohexamer, three peripheral stalks each consisting of EG heterodimers, one central rotor including subunits D and F, and the regulatory subunits C and H (PubMed:33065002). The proton translocation complex V0 consists of the proton transport subunit a, a ring of proteolipid subunits c9c'', rotary subunit d, subunits e and f, and the accessory subunits ATP6AP1/Ac45 and ATP6AP2/PRR (PubMed:33065002). Interacts with SNX10 (PubMed:21844891).</text>
</comment>
<comment type="interaction">
    <interactant intactId="EBI-2684998">
        <id>Q9Y5K8</id>
    </interactant>
    <interactant intactId="EBI-714690">
        <id>Q16864</id>
        <label>ATP6V1F</label>
    </interactant>
    <organismsDiffer>false</organismsDiffer>
    <experiments>7</experiments>
</comment>
<comment type="interaction">
    <interactant intactId="EBI-2684998">
        <id>Q9Y5K8</id>
    </interactant>
    <interactant intactId="EBI-752084">
        <id>Q9BUW7</id>
        <label>BBLN</label>
    </interactant>
    <organismsDiffer>false</organismsDiffer>
    <experiments>9</experiments>
</comment>
<comment type="interaction">
    <interactant intactId="EBI-2684998">
        <id>Q9Y5K8</id>
    </interactant>
    <interactant intactId="EBI-2514791">
        <id>Q96CS2</id>
        <label>HAUS1</label>
    </interactant>
    <organismsDiffer>false</organismsDiffer>
    <experiments>3</experiments>
</comment>
<comment type="interaction">
    <interactant intactId="EBI-2684998">
        <id>Q9Y5K8</id>
    </interactant>
    <interactant intactId="EBI-3044087">
        <id>Q7Z3Y8</id>
        <label>KRT27</label>
    </interactant>
    <organismsDiffer>false</organismsDiffer>
    <experiments>3</experiments>
</comment>
<comment type="interaction">
    <interactant intactId="EBI-2684998">
        <id>Q9Y5K8</id>
    </interactant>
    <interactant intactId="EBI-715849">
        <id>O14777</id>
        <label>NDC80</label>
    </interactant>
    <organismsDiffer>false</organismsDiffer>
    <experiments>3</experiments>
</comment>
<comment type="interaction">
    <interactant intactId="EBI-2684998">
        <id>Q9Y5K8</id>
    </interactant>
    <interactant intactId="EBI-2799833">
        <id>Q8N1B4</id>
        <label>VPS52</label>
    </interactant>
    <organismsDiffer>false</organismsDiffer>
    <experiments>6</experiments>
</comment>
<comment type="subcellular location">
    <subcellularLocation>
        <location evidence="5">Membrane</location>
        <topology evidence="5">Peripheral membrane protein</topology>
        <orientation evidence="5">Cytoplasmic side</orientation>
    </subcellularLocation>
    <subcellularLocation>
        <location evidence="1">Cytoplasmic vesicle</location>
        <location evidence="1">Clathrin-coated vesicle membrane</location>
        <topology evidence="4">Peripheral membrane protein</topology>
    </subcellularLocation>
    <subcellularLocation>
        <location evidence="2">Cytoplasm</location>
        <location evidence="2">Cytoskeleton</location>
        <location evidence="2">Microtubule organizing center</location>
        <location evidence="2">Centrosome</location>
    </subcellularLocation>
    <subcellularLocation>
        <location evidence="2">Cell projection</location>
        <location evidence="2">Cilium</location>
    </subcellularLocation>
    <text evidence="2">Localizes to centrosome and the base of the cilium.</text>
</comment>
<comment type="similarity">
    <text evidence="4">Belongs to the V-ATPase D subunit family.</text>
</comment>
<reference key="1">
    <citation type="submission" date="1999-04" db="EMBL/GenBank/DDBJ databases">
        <authorList>
            <person name="Zhao Y."/>
            <person name="Cao H.Q."/>
            <person name="Wei Y.J."/>
            <person name="Jiang Y.X."/>
            <person name="Zhao X.W."/>
            <person name="Liu D.Q."/>
            <person name="Meng X.M."/>
            <person name="Liu Y.Q."/>
            <person name="Xu Y.Y."/>
            <person name="Sheng H."/>
            <person name="Liu S."/>
            <person name="Qiao M."/>
            <person name="Hui R.T."/>
            <person name="Ding J.F."/>
        </authorList>
    </citation>
    <scope>NUCLEOTIDE SEQUENCE [MRNA]</scope>
    <source>
        <tissue>Heart</tissue>
    </source>
</reference>
<reference key="2">
    <citation type="journal article" date="2000" name="Proc. Natl. Acad. Sci. U.S.A.">
        <title>Gene expression profiling in the human hypothalamus-pituitary-adrenal axis and full-length cDNA cloning.</title>
        <authorList>
            <person name="Hu R.-M."/>
            <person name="Han Z.-G."/>
            <person name="Song H.-D."/>
            <person name="Peng Y.-D."/>
            <person name="Huang Q.-H."/>
            <person name="Ren S.-X."/>
            <person name="Gu Y.-J."/>
            <person name="Huang C.-H."/>
            <person name="Li Y.-B."/>
            <person name="Jiang C.-L."/>
            <person name="Fu G."/>
            <person name="Zhang Q.-H."/>
            <person name="Gu B.-W."/>
            <person name="Dai M."/>
            <person name="Mao Y.-F."/>
            <person name="Gao G.-F."/>
            <person name="Rong R."/>
            <person name="Ye M."/>
            <person name="Zhou J."/>
            <person name="Xu S.-H."/>
            <person name="Gu J."/>
            <person name="Shi J.-X."/>
            <person name="Jin W.-R."/>
            <person name="Zhang C.-K."/>
            <person name="Wu T.-M."/>
            <person name="Huang G.-Y."/>
            <person name="Chen Z."/>
            <person name="Chen M.-D."/>
            <person name="Chen J.-L."/>
        </authorList>
    </citation>
    <scope>NUCLEOTIDE SEQUENCE [LARGE SCALE MRNA]</scope>
    <source>
        <tissue>Pituitary</tissue>
    </source>
</reference>
<reference key="3">
    <citation type="submission" date="1998-11" db="EMBL/GenBank/DDBJ databases">
        <title>cDNA of human vacuolar H-ATPase subunit D (VATD) interacts with Rb.</title>
        <authorList>
            <person name="Quan L."/>
            <person name="Hong W."/>
            <person name="Shizhou A."/>
        </authorList>
    </citation>
    <scope>NUCLEOTIDE SEQUENCE [MRNA]</scope>
    <source>
        <tissue>Brain</tissue>
    </source>
</reference>
<reference key="4">
    <citation type="journal article" date="2004" name="Nat. Genet.">
        <title>Complete sequencing and characterization of 21,243 full-length human cDNAs.</title>
        <authorList>
            <person name="Ota T."/>
            <person name="Suzuki Y."/>
            <person name="Nishikawa T."/>
            <person name="Otsuki T."/>
            <person name="Sugiyama T."/>
            <person name="Irie R."/>
            <person name="Wakamatsu A."/>
            <person name="Hayashi K."/>
            <person name="Sato H."/>
            <person name="Nagai K."/>
            <person name="Kimura K."/>
            <person name="Makita H."/>
            <person name="Sekine M."/>
            <person name="Obayashi M."/>
            <person name="Nishi T."/>
            <person name="Shibahara T."/>
            <person name="Tanaka T."/>
            <person name="Ishii S."/>
            <person name="Yamamoto J."/>
            <person name="Saito K."/>
            <person name="Kawai Y."/>
            <person name="Isono Y."/>
            <person name="Nakamura Y."/>
            <person name="Nagahari K."/>
            <person name="Murakami K."/>
            <person name="Yasuda T."/>
            <person name="Iwayanagi T."/>
            <person name="Wagatsuma M."/>
            <person name="Shiratori A."/>
            <person name="Sudo H."/>
            <person name="Hosoiri T."/>
            <person name="Kaku Y."/>
            <person name="Kodaira H."/>
            <person name="Kondo H."/>
            <person name="Sugawara M."/>
            <person name="Takahashi M."/>
            <person name="Kanda K."/>
            <person name="Yokoi T."/>
            <person name="Furuya T."/>
            <person name="Kikkawa E."/>
            <person name="Omura Y."/>
            <person name="Abe K."/>
            <person name="Kamihara K."/>
            <person name="Katsuta N."/>
            <person name="Sato K."/>
            <person name="Tanikawa M."/>
            <person name="Yamazaki M."/>
            <person name="Ninomiya K."/>
            <person name="Ishibashi T."/>
            <person name="Yamashita H."/>
            <person name="Murakawa K."/>
            <person name="Fujimori K."/>
            <person name="Tanai H."/>
            <person name="Kimata M."/>
            <person name="Watanabe M."/>
            <person name="Hiraoka S."/>
            <person name="Chiba Y."/>
            <person name="Ishida S."/>
            <person name="Ono Y."/>
            <person name="Takiguchi S."/>
            <person name="Watanabe S."/>
            <person name="Yosida M."/>
            <person name="Hotuta T."/>
            <person name="Kusano J."/>
            <person name="Kanehori K."/>
            <person name="Takahashi-Fujii A."/>
            <person name="Hara H."/>
            <person name="Tanase T.-O."/>
            <person name="Nomura Y."/>
            <person name="Togiya S."/>
            <person name="Komai F."/>
            <person name="Hara R."/>
            <person name="Takeuchi K."/>
            <person name="Arita M."/>
            <person name="Imose N."/>
            <person name="Musashino K."/>
            <person name="Yuuki H."/>
            <person name="Oshima A."/>
            <person name="Sasaki N."/>
            <person name="Aotsuka S."/>
            <person name="Yoshikawa Y."/>
            <person name="Matsunawa H."/>
            <person name="Ichihara T."/>
            <person name="Shiohata N."/>
            <person name="Sano S."/>
            <person name="Moriya S."/>
            <person name="Momiyama H."/>
            <person name="Satoh N."/>
            <person name="Takami S."/>
            <person name="Terashima Y."/>
            <person name="Suzuki O."/>
            <person name="Nakagawa S."/>
            <person name="Senoh A."/>
            <person name="Mizoguchi H."/>
            <person name="Goto Y."/>
            <person name="Shimizu F."/>
            <person name="Wakebe H."/>
            <person name="Hishigaki H."/>
            <person name="Watanabe T."/>
            <person name="Sugiyama A."/>
            <person name="Takemoto M."/>
            <person name="Kawakami B."/>
            <person name="Yamazaki M."/>
            <person name="Watanabe K."/>
            <person name="Kumagai A."/>
            <person name="Itakura S."/>
            <person name="Fukuzumi Y."/>
            <person name="Fujimori Y."/>
            <person name="Komiyama M."/>
            <person name="Tashiro H."/>
            <person name="Tanigami A."/>
            <person name="Fujiwara T."/>
            <person name="Ono T."/>
            <person name="Yamada K."/>
            <person name="Fujii Y."/>
            <person name="Ozaki K."/>
            <person name="Hirao M."/>
            <person name="Ohmori Y."/>
            <person name="Kawabata A."/>
            <person name="Hikiji T."/>
            <person name="Kobatake N."/>
            <person name="Inagaki H."/>
            <person name="Ikema Y."/>
            <person name="Okamoto S."/>
            <person name="Okitani R."/>
            <person name="Kawakami T."/>
            <person name="Noguchi S."/>
            <person name="Itoh T."/>
            <person name="Shigeta K."/>
            <person name="Senba T."/>
            <person name="Matsumura K."/>
            <person name="Nakajima Y."/>
            <person name="Mizuno T."/>
            <person name="Morinaga M."/>
            <person name="Sasaki M."/>
            <person name="Togashi T."/>
            <person name="Oyama M."/>
            <person name="Hata H."/>
            <person name="Watanabe M."/>
            <person name="Komatsu T."/>
            <person name="Mizushima-Sugano J."/>
            <person name="Satoh T."/>
            <person name="Shirai Y."/>
            <person name="Takahashi Y."/>
            <person name="Nakagawa K."/>
            <person name="Okumura K."/>
            <person name="Nagase T."/>
            <person name="Nomura N."/>
            <person name="Kikuchi H."/>
            <person name="Masuho Y."/>
            <person name="Yamashita R."/>
            <person name="Nakai K."/>
            <person name="Yada T."/>
            <person name="Nakamura Y."/>
            <person name="Ohara O."/>
            <person name="Isogai T."/>
            <person name="Sugano S."/>
        </authorList>
    </citation>
    <scope>NUCLEOTIDE SEQUENCE [LARGE SCALE MRNA]</scope>
    <source>
        <tissue>Trachea</tissue>
    </source>
</reference>
<reference key="5">
    <citation type="submission" date="2005-07" db="EMBL/GenBank/DDBJ databases">
        <authorList>
            <person name="Mural R.J."/>
            <person name="Istrail S."/>
            <person name="Sutton G.G."/>
            <person name="Florea L."/>
            <person name="Halpern A.L."/>
            <person name="Mobarry C.M."/>
            <person name="Lippert R."/>
            <person name="Walenz B."/>
            <person name="Shatkay H."/>
            <person name="Dew I."/>
            <person name="Miller J.R."/>
            <person name="Flanigan M.J."/>
            <person name="Edwards N.J."/>
            <person name="Bolanos R."/>
            <person name="Fasulo D."/>
            <person name="Halldorsson B.V."/>
            <person name="Hannenhalli S."/>
            <person name="Turner R."/>
            <person name="Yooseph S."/>
            <person name="Lu F."/>
            <person name="Nusskern D.R."/>
            <person name="Shue B.C."/>
            <person name="Zheng X.H."/>
            <person name="Zhong F."/>
            <person name="Delcher A.L."/>
            <person name="Huson D.H."/>
            <person name="Kravitz S.A."/>
            <person name="Mouchard L."/>
            <person name="Reinert K."/>
            <person name="Remington K.A."/>
            <person name="Clark A.G."/>
            <person name="Waterman M.S."/>
            <person name="Eichler E.E."/>
            <person name="Adams M.D."/>
            <person name="Hunkapiller M.W."/>
            <person name="Myers E.W."/>
            <person name="Venter J.C."/>
        </authorList>
    </citation>
    <scope>NUCLEOTIDE SEQUENCE [LARGE SCALE GENOMIC DNA]</scope>
</reference>
<reference key="6">
    <citation type="journal article" date="2004" name="Genome Res.">
        <title>The status, quality, and expansion of the NIH full-length cDNA project: the Mammalian Gene Collection (MGC).</title>
        <authorList>
            <consortium name="The MGC Project Team"/>
        </authorList>
    </citation>
    <scope>NUCLEOTIDE SEQUENCE [LARGE SCALE MRNA]</scope>
    <source>
        <tissue>Placenta</tissue>
    </source>
</reference>
<reference key="7">
    <citation type="journal article" date="2011" name="BMC Syst. Biol.">
        <title>Initial characterization of the human central proteome.</title>
        <authorList>
            <person name="Burkard T.R."/>
            <person name="Planyavsky M."/>
            <person name="Kaupe I."/>
            <person name="Breitwieser F.P."/>
            <person name="Buerckstuemmer T."/>
            <person name="Bennett K.L."/>
            <person name="Superti-Furga G."/>
            <person name="Colinge J."/>
        </authorList>
    </citation>
    <scope>IDENTIFICATION BY MASS SPECTROMETRY [LARGE SCALE ANALYSIS]</scope>
</reference>
<reference key="8">
    <citation type="journal article" date="2012" name="Cell Res.">
        <title>A SNX10/V-ATPase pathway regulates ciliogenesis in vitro and in vivo.</title>
        <authorList>
            <person name="Chen Y."/>
            <person name="Wu B."/>
            <person name="Xu L."/>
            <person name="Li H."/>
            <person name="Xia J."/>
            <person name="Yin W."/>
            <person name="Li Z."/>
            <person name="Shi D."/>
            <person name="Li S."/>
            <person name="Lin S."/>
            <person name="Shu X."/>
            <person name="Pei D."/>
        </authorList>
    </citation>
    <scope>FUNCTION IN CILIOGENESIS</scope>
    <scope>INTERACTION WITH SNX10</scope>
    <scope>SUBCELLULAR LOCATION</scope>
</reference>
<reference key="9">
    <citation type="journal article" date="2015" name="Proteomics">
        <title>N-terminome analysis of the human mitochondrial proteome.</title>
        <authorList>
            <person name="Vaca Jacome A.S."/>
            <person name="Rabilloud T."/>
            <person name="Schaeffer-Reiss C."/>
            <person name="Rompais M."/>
            <person name="Ayoub D."/>
            <person name="Lane L."/>
            <person name="Bairoch A."/>
            <person name="Van Dorsselaer A."/>
            <person name="Carapito C."/>
        </authorList>
    </citation>
    <scope>IDENTIFICATION BY MASS SPECTROMETRY [LARGE SCALE ANALYSIS]</scope>
</reference>
<reference evidence="6 7 8 9" key="10">
    <citation type="journal article" date="2020" name="Mol. Cell">
        <title>Structures of a Complete Human V-ATPase Reveal Mechanisms of Its Assembly.</title>
        <authorList>
            <person name="Wang L."/>
            <person name="Wu D."/>
            <person name="Robinson C.V."/>
            <person name="Wu H."/>
            <person name="Fu T.M."/>
        </authorList>
    </citation>
    <scope>STRUCTURE BY ELECTRON MICROSCOPY (2.90 ANGSTROMS)</scope>
    <scope>FUNCTION</scope>
    <scope>IDENTIFICATION IN THE V-ATPASE COMPLEX</scope>
</reference>
<name>VATD_HUMAN</name>
<evidence type="ECO:0000250" key="1">
    <source>
        <dbReference type="UniProtKB" id="P39942"/>
    </source>
</evidence>
<evidence type="ECO:0000269" key="2">
    <source>
    </source>
</evidence>
<evidence type="ECO:0000269" key="3">
    <source>
    </source>
</evidence>
<evidence type="ECO:0000305" key="4"/>
<evidence type="ECO:0000305" key="5">
    <source>
    </source>
</evidence>
<evidence type="ECO:0007744" key="6">
    <source>
        <dbReference type="PDB" id="6WLZ"/>
    </source>
</evidence>
<evidence type="ECO:0007744" key="7">
    <source>
        <dbReference type="PDB" id="6WM2"/>
    </source>
</evidence>
<evidence type="ECO:0007744" key="8">
    <source>
        <dbReference type="PDB" id="6WM3"/>
    </source>
</evidence>
<evidence type="ECO:0007744" key="9">
    <source>
        <dbReference type="PDB" id="6WM4"/>
    </source>
</evidence>
<evidence type="ECO:0007829" key="10">
    <source>
        <dbReference type="PDB" id="6WLZ"/>
    </source>
</evidence>
<evidence type="ECO:0007829" key="11">
    <source>
        <dbReference type="PDB" id="6WM2"/>
    </source>
</evidence>
<protein>
    <recommendedName>
        <fullName>V-type proton ATPase subunit D</fullName>
        <shortName>V-ATPase subunit D</shortName>
    </recommendedName>
    <alternativeName>
        <fullName>V-ATPase 28 kDa accessory protein</fullName>
    </alternativeName>
    <alternativeName>
        <fullName>Vacuolar proton pump subunit D</fullName>
    </alternativeName>
</protein>
<accession>Q9Y5K8</accession>
<accession>B2RE33</accession>
<accession>Q9Y688</accession>
<organism>
    <name type="scientific">Homo sapiens</name>
    <name type="common">Human</name>
    <dbReference type="NCBI Taxonomy" id="9606"/>
    <lineage>
        <taxon>Eukaryota</taxon>
        <taxon>Metazoa</taxon>
        <taxon>Chordata</taxon>
        <taxon>Craniata</taxon>
        <taxon>Vertebrata</taxon>
        <taxon>Euteleostomi</taxon>
        <taxon>Mammalia</taxon>
        <taxon>Eutheria</taxon>
        <taxon>Euarchontoglires</taxon>
        <taxon>Primates</taxon>
        <taxon>Haplorrhini</taxon>
        <taxon>Catarrhini</taxon>
        <taxon>Hominidae</taxon>
        <taxon>Homo</taxon>
    </lineage>
</organism>